<feature type="transit peptide" description="Mitochondrion" evidence="2">
    <location>
        <begin position="1"/>
        <end position="68"/>
    </location>
</feature>
<feature type="chain" id="PRO_0000461485" description="NAD-dependent malic enzyme, mitochondrial" evidence="2">
    <location>
        <begin position="69"/>
        <end position="600"/>
    </location>
</feature>
<feature type="active site" description="Proton donor" evidence="3">
    <location>
        <position position="138"/>
    </location>
</feature>
<feature type="active site" description="Proton acceptor" evidence="3">
    <location>
        <position position="212"/>
    </location>
</feature>
<feature type="binding site" evidence="1">
    <location>
        <position position="93"/>
    </location>
    <ligand>
        <name>fumarate</name>
        <dbReference type="ChEBI" id="CHEBI:29806"/>
        <note>allosteric activator</note>
    </ligand>
</feature>
<feature type="binding site" evidence="1">
    <location>
        <position position="194"/>
    </location>
    <ligand>
        <name>(S)-malate</name>
        <dbReference type="ChEBI" id="CHEBI:15589"/>
    </ligand>
</feature>
<feature type="binding site" evidence="1">
    <location>
        <position position="194"/>
    </location>
    <ligand>
        <name>NAD(+)</name>
        <dbReference type="ChEBI" id="CHEBI:57540"/>
    </ligand>
</feature>
<feature type="binding site" evidence="4">
    <location>
        <position position="283"/>
    </location>
    <ligand>
        <name>a divalent metal cation</name>
        <dbReference type="ChEBI" id="CHEBI:60240"/>
    </ligand>
</feature>
<feature type="binding site" evidence="4">
    <location>
        <position position="284"/>
    </location>
    <ligand>
        <name>a divalent metal cation</name>
        <dbReference type="ChEBI" id="CHEBI:60240"/>
    </ligand>
</feature>
<feature type="binding site" evidence="4">
    <location>
        <position position="307"/>
    </location>
    <ligand>
        <name>a divalent metal cation</name>
        <dbReference type="ChEBI" id="CHEBI:60240"/>
    </ligand>
</feature>
<feature type="binding site" evidence="1">
    <location>
        <position position="344"/>
    </location>
    <ligand>
        <name>NAD(+)</name>
        <dbReference type="ChEBI" id="CHEBI:57540"/>
    </ligand>
</feature>
<feature type="binding site" evidence="1">
    <location>
        <position position="347"/>
    </location>
    <ligand>
        <name>NAD(+)</name>
        <dbReference type="ChEBI" id="CHEBI:57540"/>
    </ligand>
</feature>
<feature type="binding site" evidence="1">
    <location>
        <position position="458"/>
    </location>
    <ligand>
        <name>(S)-malate</name>
        <dbReference type="ChEBI" id="CHEBI:15589"/>
    </ligand>
</feature>
<feature type="binding site" evidence="1">
    <location>
        <position position="502"/>
    </location>
    <ligand>
        <name>(S)-malate</name>
        <dbReference type="ChEBI" id="CHEBI:15589"/>
    </ligand>
</feature>
<feature type="splice variant" id="VSP_062456" description="In isoform 2." evidence="5">
    <location>
        <begin position="1"/>
        <end position="59"/>
    </location>
</feature>
<organism evidence="9">
    <name type="scientific">Cryptococcus neoformans var. grubii serotype A (strain H99 / ATCC 208821 / CBS 10515 / FGSC 9487)</name>
    <name type="common">Filobasidiella neoformans var. grubii</name>
    <dbReference type="NCBI Taxonomy" id="235443"/>
    <lineage>
        <taxon>Eukaryota</taxon>
        <taxon>Fungi</taxon>
        <taxon>Dikarya</taxon>
        <taxon>Basidiomycota</taxon>
        <taxon>Agaricomycotina</taxon>
        <taxon>Tremellomycetes</taxon>
        <taxon>Tremellales</taxon>
        <taxon>Cryptococcaceae</taxon>
        <taxon>Cryptococcus</taxon>
        <taxon>Cryptococcus neoformans species complex</taxon>
    </lineage>
</organism>
<name>MAOM_CRYNH</name>
<sequence>MTRTPFTLSLRSTDSVFKIRQSLSTVLSHSSTKIISRGYITIPITSTIAYHRPTIRLFNMPIAAPVRTLSSSQPLKRSTSPLPAITPAQNLLRLKAHLQNLPTPLLKHVHLSKIRREDPNLFFSVMRDELTDLAPIVYTPTVGEACQKYSQIYSGPEGLYLNIEDKDRIPEILRQYASKLVTPPQILVVTDGSRILGLGDLGIGGMGISVGKLNLYVAGGGVNPHGCLPVVLDMGTNNETIRNDPLYIGLKQSRVGLEEATEFMDAFMAAASEAFPKAVIQHEDFYSEAAFDFLARYKEKYRMFNDDIEGTGSVILAGFLAAAKQASEASGKPLRDHKVVFLGGGSAAVGVAKEMMNFFMMQGLTEDEARERFWLIDTKGLITSTRADVVSGKIASHKKFFIRNDTEGKEYPSLESVIEYVQPTALVGLSTTFGAFSEFAVRRMAELNQSPIIFPLSNPTSKCELAFSDALEWTDGRVLFASGSPYPPQQFKGTLREPGQGNNFLVFPGIGFGALQAGCKRITTGMITASAIALSEALTPEEKQKGLLYPRLERIRAVSARVAAGVVKQAQEDGVDTNETLRGLDIEALTEEMNKAQWWP</sequence>
<evidence type="ECO:0000250" key="1">
    <source>
        <dbReference type="UniProtKB" id="P23368"/>
    </source>
</evidence>
<evidence type="ECO:0000255" key="2"/>
<evidence type="ECO:0000255" key="3">
    <source>
        <dbReference type="PIRSR" id="PIRSR000106-1"/>
    </source>
</evidence>
<evidence type="ECO:0000255" key="4">
    <source>
        <dbReference type="PIRSR" id="PIRSR000106-3"/>
    </source>
</evidence>
<evidence type="ECO:0000269" key="5">
    <source>
    </source>
</evidence>
<evidence type="ECO:0000303" key="6">
    <source>
    </source>
</evidence>
<evidence type="ECO:0000305" key="7"/>
<evidence type="ECO:0000312" key="8">
    <source>
        <dbReference type="EMBL" id="AFR98612.1"/>
    </source>
</evidence>
<evidence type="ECO:0000312" key="9">
    <source>
        <dbReference type="Proteomes" id="UP000010091"/>
    </source>
</evidence>
<reference evidence="9" key="1">
    <citation type="journal article" date="2014" name="PLoS Genet.">
        <title>Analysis of the genome and transcriptome of Cryptococcus neoformans var. grubii reveals complex RNA expression and microevolution leading to virulence attenuation.</title>
        <authorList>
            <person name="Janbon G."/>
            <person name="Ormerod K.L."/>
            <person name="Paulet D."/>
            <person name="Byrnes E.J. III"/>
            <person name="Yadav V."/>
            <person name="Chatterjee G."/>
            <person name="Mullapudi N."/>
            <person name="Hon C.-C."/>
            <person name="Billmyre R.B."/>
            <person name="Brunel F."/>
            <person name="Bahn Y.-S."/>
            <person name="Chen W."/>
            <person name="Chen Y."/>
            <person name="Chow E.W.L."/>
            <person name="Coppee J.-Y."/>
            <person name="Floyd-Averette A."/>
            <person name="Gaillardin C."/>
            <person name="Gerik K.J."/>
            <person name="Goldberg J."/>
            <person name="Gonzalez-Hilarion S."/>
            <person name="Gujja S."/>
            <person name="Hamlin J.L."/>
            <person name="Hsueh Y.-P."/>
            <person name="Ianiri G."/>
            <person name="Jones S."/>
            <person name="Kodira C.D."/>
            <person name="Kozubowski L."/>
            <person name="Lam W."/>
            <person name="Marra M."/>
            <person name="Mesner L.D."/>
            <person name="Mieczkowski P.A."/>
            <person name="Moyrand F."/>
            <person name="Nielsen K."/>
            <person name="Proux C."/>
            <person name="Rossignol T."/>
            <person name="Schein J.E."/>
            <person name="Sun S."/>
            <person name="Wollschlaeger C."/>
            <person name="Wood I.A."/>
            <person name="Zeng Q."/>
            <person name="Neuveglise C."/>
            <person name="Newlon C.S."/>
            <person name="Perfect J.R."/>
            <person name="Lodge J.K."/>
            <person name="Idnurm A."/>
            <person name="Stajich J.E."/>
            <person name="Kronstad J.W."/>
            <person name="Sanyal K."/>
            <person name="Heitman J."/>
            <person name="Fraser J.A."/>
            <person name="Cuomo C.A."/>
            <person name="Dietrich F.S."/>
        </authorList>
    </citation>
    <scope>NUCLEOTIDE SEQUENCE [LARGE SCALE GENOMIC DNA]</scope>
    <source>
        <strain evidence="9">H99 / ATCC 208821 / CBS 10515 / FGSC 9487</strain>
    </source>
</reference>
<reference evidence="7" key="2">
    <citation type="journal article" date="2024" name="PLoS Biol.">
        <title>Alternative TSS use is widespread in Cryptococcus fungi in response to environmental cues and regulated genome-wide by the transcription factor Tur1.</title>
        <authorList>
            <person name="Dang T.T.V."/>
            <person name="Maufrais C."/>
            <person name="Colin J."/>
            <person name="Moyrand F."/>
            <person name="Mouyna I."/>
            <person name="Coppee J.Y."/>
            <person name="Onyishi C.U."/>
            <person name="Lipecka J."/>
            <person name="Guerrera I.C."/>
            <person name="May R.C."/>
            <person name="Janbon G."/>
        </authorList>
    </citation>
    <scope>SUBCELLULAR LOCATION (ISOFORMS 1 AND 2)</scope>
</reference>
<proteinExistence type="inferred from homology"/>
<accession>J9VVW8</accession>
<dbReference type="EC" id="1.1.1.38" evidence="1"/>
<dbReference type="EMBL" id="CP003832">
    <property type="protein sequence ID" value="AFR98612.1"/>
    <property type="molecule type" value="Genomic_DNA"/>
</dbReference>
<dbReference type="RefSeq" id="XP_012053449.1">
    <molecule id="J9VVW8-1"/>
    <property type="nucleotide sequence ID" value="XM_012198059.1"/>
</dbReference>
<dbReference type="SMR" id="J9VVW8"/>
<dbReference type="GeneID" id="23889585"/>
<dbReference type="KEGG" id="cng:CNAG_06374"/>
<dbReference type="VEuPathDB" id="FungiDB:CNAG_06374"/>
<dbReference type="HOGENOM" id="CLU_011405_5_2_1"/>
<dbReference type="OrthoDB" id="4147at5206"/>
<dbReference type="Proteomes" id="UP000010091">
    <property type="component" value="Chromosome 13"/>
</dbReference>
<dbReference type="GO" id="GO:0005829">
    <property type="term" value="C:cytosol"/>
    <property type="evidence" value="ECO:0000314"/>
    <property type="project" value="UniProtKB"/>
</dbReference>
<dbReference type="GO" id="GO:0005759">
    <property type="term" value="C:mitochondrial matrix"/>
    <property type="evidence" value="ECO:0007669"/>
    <property type="project" value="UniProtKB-SubCell"/>
</dbReference>
<dbReference type="GO" id="GO:0005739">
    <property type="term" value="C:mitochondrion"/>
    <property type="evidence" value="ECO:0000314"/>
    <property type="project" value="UniProtKB"/>
</dbReference>
<dbReference type="GO" id="GO:0005634">
    <property type="term" value="C:nucleus"/>
    <property type="evidence" value="ECO:0000314"/>
    <property type="project" value="UniProtKB"/>
</dbReference>
<dbReference type="GO" id="GO:0004471">
    <property type="term" value="F:malate dehydrogenase (decarboxylating) (NAD+) activity"/>
    <property type="evidence" value="ECO:0007669"/>
    <property type="project" value="TreeGrafter"/>
</dbReference>
<dbReference type="GO" id="GO:0046872">
    <property type="term" value="F:metal ion binding"/>
    <property type="evidence" value="ECO:0007669"/>
    <property type="project" value="UniProtKB-KW"/>
</dbReference>
<dbReference type="GO" id="GO:0051287">
    <property type="term" value="F:NAD binding"/>
    <property type="evidence" value="ECO:0007669"/>
    <property type="project" value="InterPro"/>
</dbReference>
<dbReference type="GO" id="GO:0006108">
    <property type="term" value="P:malate metabolic process"/>
    <property type="evidence" value="ECO:0007669"/>
    <property type="project" value="TreeGrafter"/>
</dbReference>
<dbReference type="FunFam" id="3.40.50.720:FF:000182">
    <property type="entry name" value="NAD-dependent malic enzyme"/>
    <property type="match status" value="1"/>
</dbReference>
<dbReference type="Gene3D" id="3.40.50.10380">
    <property type="entry name" value="Malic enzyme, N-terminal domain"/>
    <property type="match status" value="1"/>
</dbReference>
<dbReference type="Gene3D" id="3.40.50.720">
    <property type="entry name" value="NAD(P)-binding Rossmann-like Domain"/>
    <property type="match status" value="1"/>
</dbReference>
<dbReference type="InterPro" id="IPR046346">
    <property type="entry name" value="Aminoacid_DH-like_N_sf"/>
</dbReference>
<dbReference type="InterPro" id="IPR015884">
    <property type="entry name" value="Malic_enzyme_CS"/>
</dbReference>
<dbReference type="InterPro" id="IPR012301">
    <property type="entry name" value="Malic_N_dom"/>
</dbReference>
<dbReference type="InterPro" id="IPR037062">
    <property type="entry name" value="Malic_N_dom_sf"/>
</dbReference>
<dbReference type="InterPro" id="IPR012302">
    <property type="entry name" value="Malic_NAD-bd"/>
</dbReference>
<dbReference type="InterPro" id="IPR001891">
    <property type="entry name" value="Malic_OxRdtase"/>
</dbReference>
<dbReference type="InterPro" id="IPR036291">
    <property type="entry name" value="NAD(P)-bd_dom_sf"/>
</dbReference>
<dbReference type="NCBIfam" id="NF010052">
    <property type="entry name" value="PRK13529.1"/>
    <property type="match status" value="1"/>
</dbReference>
<dbReference type="PANTHER" id="PTHR23406">
    <property type="entry name" value="MALIC ENZYME-RELATED"/>
    <property type="match status" value="1"/>
</dbReference>
<dbReference type="PANTHER" id="PTHR23406:SF32">
    <property type="entry name" value="NADP-DEPENDENT MALIC ENZYME"/>
    <property type="match status" value="1"/>
</dbReference>
<dbReference type="Pfam" id="PF00390">
    <property type="entry name" value="malic"/>
    <property type="match status" value="1"/>
</dbReference>
<dbReference type="Pfam" id="PF03949">
    <property type="entry name" value="Malic_M"/>
    <property type="match status" value="1"/>
</dbReference>
<dbReference type="PIRSF" id="PIRSF000106">
    <property type="entry name" value="ME"/>
    <property type="match status" value="1"/>
</dbReference>
<dbReference type="PRINTS" id="PR00072">
    <property type="entry name" value="MALOXRDTASE"/>
</dbReference>
<dbReference type="SMART" id="SM01274">
    <property type="entry name" value="malic"/>
    <property type="match status" value="1"/>
</dbReference>
<dbReference type="SMART" id="SM00919">
    <property type="entry name" value="Malic_M"/>
    <property type="match status" value="1"/>
</dbReference>
<dbReference type="SUPFAM" id="SSF53223">
    <property type="entry name" value="Aminoacid dehydrogenase-like, N-terminal domain"/>
    <property type="match status" value="1"/>
</dbReference>
<dbReference type="SUPFAM" id="SSF51735">
    <property type="entry name" value="NAD(P)-binding Rossmann-fold domains"/>
    <property type="match status" value="1"/>
</dbReference>
<dbReference type="PROSITE" id="PS00331">
    <property type="entry name" value="MALIC_ENZYMES"/>
    <property type="match status" value="1"/>
</dbReference>
<protein>
    <recommendedName>
        <fullName evidence="7">NAD-dependent malic enzyme, mitochondrial</fullName>
        <shortName evidence="7">NAD-ME</shortName>
        <ecNumber evidence="1">1.1.1.38</ecNumber>
    </recommendedName>
</protein>
<keyword id="KW-0877">Alternative promoter usage</keyword>
<keyword id="KW-0963">Cytoplasm</keyword>
<keyword id="KW-0479">Metal-binding</keyword>
<keyword id="KW-0496">Mitochondrion</keyword>
<keyword id="KW-0520">NAD</keyword>
<keyword id="KW-0539">Nucleus</keyword>
<keyword id="KW-0560">Oxidoreductase</keyword>
<keyword id="KW-0809">Transit peptide</keyword>
<comment type="function">
    <text evidence="1">NAD-dependent mitochondrial malic enzyme that catalyzes the oxidative decarboxylation of malate to pyruvate.</text>
</comment>
<comment type="catalytic activity">
    <reaction evidence="1">
        <text>(S)-malate + NAD(+) = pyruvate + CO2 + NADH</text>
        <dbReference type="Rhea" id="RHEA:12653"/>
        <dbReference type="ChEBI" id="CHEBI:15361"/>
        <dbReference type="ChEBI" id="CHEBI:15589"/>
        <dbReference type="ChEBI" id="CHEBI:16526"/>
        <dbReference type="ChEBI" id="CHEBI:57540"/>
        <dbReference type="ChEBI" id="CHEBI:57945"/>
        <dbReference type="EC" id="1.1.1.38"/>
    </reaction>
</comment>
<comment type="catalytic activity">
    <reaction evidence="1">
        <text>oxaloacetate + H(+) = pyruvate + CO2</text>
        <dbReference type="Rhea" id="RHEA:15641"/>
        <dbReference type="ChEBI" id="CHEBI:15361"/>
        <dbReference type="ChEBI" id="CHEBI:15378"/>
        <dbReference type="ChEBI" id="CHEBI:16452"/>
        <dbReference type="ChEBI" id="CHEBI:16526"/>
        <dbReference type="EC" id="1.1.1.38"/>
    </reaction>
</comment>
<comment type="cofactor">
    <cofactor evidence="1">
        <name>Mg(2+)</name>
        <dbReference type="ChEBI" id="CHEBI:18420"/>
    </cofactor>
    <cofactor evidence="1">
        <name>Mn(2+)</name>
        <dbReference type="ChEBI" id="CHEBI:29035"/>
    </cofactor>
    <text evidence="1">Divalent metal cations. Prefers magnesium or manganese.</text>
</comment>
<comment type="subcellular location">
    <molecule>Isoform 1</molecule>
    <subcellularLocation>
        <location evidence="5">Mitochondrion matrix</location>
    </subcellularLocation>
    <text evidence="5">Localizes to the mitochondrion in stationary phase.</text>
</comment>
<comment type="subcellular location">
    <molecule>Isoform 2</molecule>
    <subcellularLocation>
        <location evidence="5">Cytoplasm</location>
        <location evidence="5">Cytosol</location>
    </subcellularLocation>
    <subcellularLocation>
        <location evidence="5">Nucleus</location>
    </subcellularLocation>
    <text evidence="5">Localizes to the nucleus and cytosol in the exponential phase.</text>
</comment>
<comment type="alternative products">
    <event type="alternative promoter"/>
    <isoform>
        <id>J9VVW8-1</id>
        <name evidence="5">1</name>
        <name evidence="6">Long</name>
        <sequence type="displayed"/>
    </isoform>
    <isoform>
        <id>J9VVW8-2</id>
        <name evidence="5">2</name>
        <name evidence="6">Short</name>
        <sequence type="described" ref="VSP_062456"/>
    </isoform>
    <text evidence="5">Alternative promoter usage is regulated by transcription factor TUR1.</text>
</comment>
<comment type="similarity">
    <text evidence="7">Belongs to the malic enzymes family.</text>
</comment>
<gene>
    <name evidence="6" type="primary">MAE102</name>
    <name evidence="8" type="ORF">CNAG_06374</name>
</gene>